<accession>A0A6F8RNE2</accession>
<keyword id="KW-0489">Methyltransferase</keyword>
<keyword id="KW-0949">S-adenosyl-L-methionine</keyword>
<keyword id="KW-0808">Transferase</keyword>
<feature type="chain" id="PRO_0000457341" description="Methyltransferase grgD">
    <location>
        <begin position="1"/>
        <end position="285"/>
    </location>
</feature>
<organism>
    <name type="scientific">Penicillium sp</name>
    <dbReference type="NCBI Taxonomy" id="5081"/>
    <lineage>
        <taxon>Eukaryota</taxon>
        <taxon>Fungi</taxon>
        <taxon>Dikarya</taxon>
        <taxon>Ascomycota</taxon>
        <taxon>Pezizomycotina</taxon>
        <taxon>Eurotiomycetes</taxon>
        <taxon>Eurotiomycetidae</taxon>
        <taxon>Eurotiales</taxon>
        <taxon>Aspergillaceae</taxon>
        <taxon>Penicillium</taxon>
    </lineage>
</organism>
<evidence type="ECO:0000269" key="1">
    <source>
    </source>
</evidence>
<evidence type="ECO:0000303" key="2">
    <source>
    </source>
</evidence>
<evidence type="ECO:0000305" key="3"/>
<proteinExistence type="evidence at protein level"/>
<dbReference type="EC" id="2.1.1.-" evidence="1"/>
<dbReference type="EMBL" id="LC522971">
    <property type="protein sequence ID" value="BCA42571.1"/>
    <property type="molecule type" value="Genomic_DNA"/>
</dbReference>
<dbReference type="SMR" id="A0A6F8RNE2"/>
<dbReference type="GO" id="GO:0008168">
    <property type="term" value="F:methyltransferase activity"/>
    <property type="evidence" value="ECO:0007669"/>
    <property type="project" value="UniProtKB-KW"/>
</dbReference>
<dbReference type="GO" id="GO:0032259">
    <property type="term" value="P:methylation"/>
    <property type="evidence" value="ECO:0007669"/>
    <property type="project" value="UniProtKB-KW"/>
</dbReference>
<dbReference type="CDD" id="cd02440">
    <property type="entry name" value="AdoMet_MTases"/>
    <property type="match status" value="1"/>
</dbReference>
<dbReference type="Gene3D" id="3.40.50.150">
    <property type="entry name" value="Vaccinia Virus protein VP39"/>
    <property type="match status" value="1"/>
</dbReference>
<dbReference type="InterPro" id="IPR013217">
    <property type="entry name" value="Methyltransf_12"/>
</dbReference>
<dbReference type="InterPro" id="IPR029063">
    <property type="entry name" value="SAM-dependent_MTases_sf"/>
</dbReference>
<dbReference type="Pfam" id="PF08242">
    <property type="entry name" value="Methyltransf_12"/>
    <property type="match status" value="1"/>
</dbReference>
<dbReference type="SUPFAM" id="SSF53335">
    <property type="entry name" value="S-adenosyl-L-methionine-dependent methyltransferases"/>
    <property type="match status" value="1"/>
</dbReference>
<sequence length="285" mass="31795">MASEKPQESVYYLKPGDEERARLNNQHRVLVHIIENELLHAPIDPSTIVKIADVGTGTGIWLDALAAHLDPIPTAIGQPRQYDGLDMSPAHFPAFHPENFHYDVYNILQPVPEGLKGKYDLVHVRLLVSALSKGDVNTAVDNLAQLLRPGGWIQWDELDGESWAGRVPSAHVREMNELVRKHMETKGMELDVPAAFVKAAEAHPRLQNVSERIFNTIKSGPELKDDVNSVYLWSCTTSTKMILQASGTPGAEEEFKRLSEGAKADIERDGIFWDSDEHVLLAQKK</sequence>
<name>GRGD_PENSQ</name>
<reference key="1">
    <citation type="journal article" date="2020" name="J. Am. Chem. Soc.">
        <title>Molecular basis for the biosynthesis of an unusual chain-fused polyketide gregatin A.</title>
        <authorList>
            <person name="Wang W.G."/>
            <person name="Wang H."/>
            <person name="Du L.Q."/>
            <person name="Li M."/>
            <person name="Chen L."/>
            <person name="Yu J."/>
            <person name="Cheng G.G."/>
            <person name="Zhan M.T."/>
            <person name="Hu Q.F."/>
            <person name="Zhang L."/>
            <person name="Yao M."/>
            <person name="Matsuda Y."/>
        </authorList>
    </citation>
    <scope>NUCLEOTIDE SEQUENCE [GENOMIC DNA]</scope>
    <scope>FUNCTION</scope>
    <scope>CATALYTIC ACTIVITY</scope>
    <scope>PATHWAY</scope>
    <source>
        <strain>Sh18</strain>
    </source>
</reference>
<comment type="function">
    <text evidence="1">Methyltransferase; part of the gene cluster that mediates the biosynthesis of gregatin A, a fungal polyketide featuring an alkylated furanone core (PubMed:32275405). The PKS grgA synthesizes C11 and C4 polyketide chains in the presence and absence of the trans-enoyl reductase grgB, respectively (PubMed:32275405). The polyketide transferase grgF is then responsible for the fusion of the two carbon chains to produce the furanone skeleton of gregatin A (PubMed:32275405). Next, the cytochrome P450 monooxygenase grgG accepts performs the oxidative cyclization to furnish the gregatin scaffold and leads to the formation of desmethylgregatin A (PubMed:32275405). Finally, the O-methyltransferase grgD methylates the carboxyl group of desmethylgregatin A to provide gregatin A (PubMed:32275405).</text>
</comment>
<comment type="pathway">
    <text evidence="1">Secondary metabolite biosynthesis.</text>
</comment>
<comment type="similarity">
    <text evidence="3">Belongs to the methyltransferase superfamily. LaeA methyltransferase family.</text>
</comment>
<protein>
    <recommendedName>
        <fullName evidence="2">Methyltransferase grgD</fullName>
        <ecNumber evidence="1">2.1.1.-</ecNumber>
    </recommendedName>
    <alternativeName>
        <fullName evidence="2">Gregatin A biosynthesis cluster protein D</fullName>
    </alternativeName>
</protein>
<gene>
    <name evidence="2" type="primary">grgD</name>
</gene>